<feature type="chain" id="PRO_0000274151" description="Epimerase family protein SACOL0834">
    <location>
        <begin position="1"/>
        <end position="300"/>
    </location>
</feature>
<protein>
    <recommendedName>
        <fullName>Epimerase family protein SACOL0834</fullName>
    </recommendedName>
</protein>
<accession>Q5HHP9</accession>
<sequence>MKQYLITGGTGMVGSQLVNEIKKSDSHITILTRHDQISNDKKISYVNWAKSGWEHKVPQNIDVVINLAGATLNKRWTPEYKQTLMLSRIQSTQALYELFKSRNKAPKALFNASATGYYPPDLFMSYTEVYKTLPFDFLSDIVYQWERFAQQFEQLGTRVVIGRFGIILSNEGGALQTMKLPYEYYIGGKLGSGQQWYSWIHINDLIQAILFLINNESASGPFNLTAPIPERQNLFGYTLARAMHKPHETWAPSLAMRLILGQMSTVVLDTQKVLPNKIQALGFQFKYSNLKMALEDLIKE</sequence>
<dbReference type="EMBL" id="CP000046">
    <property type="protein sequence ID" value="AAW36390.1"/>
    <property type="molecule type" value="Genomic_DNA"/>
</dbReference>
<dbReference type="RefSeq" id="WP_000816295.1">
    <property type="nucleotide sequence ID" value="NZ_JBGOFO010000005.1"/>
</dbReference>
<dbReference type="SMR" id="Q5HHP9"/>
<dbReference type="KEGG" id="sac:SACOL0834"/>
<dbReference type="HOGENOM" id="CLU_047373_0_3_9"/>
<dbReference type="Proteomes" id="UP000000530">
    <property type="component" value="Chromosome"/>
</dbReference>
<dbReference type="Gene3D" id="3.40.50.720">
    <property type="entry name" value="NAD(P)-binding Rossmann-like Domain"/>
    <property type="match status" value="1"/>
</dbReference>
<dbReference type="InterPro" id="IPR013549">
    <property type="entry name" value="DUF1731"/>
</dbReference>
<dbReference type="InterPro" id="IPR001509">
    <property type="entry name" value="Epimerase_deHydtase"/>
</dbReference>
<dbReference type="InterPro" id="IPR036291">
    <property type="entry name" value="NAD(P)-bd_dom_sf"/>
</dbReference>
<dbReference type="InterPro" id="IPR010099">
    <property type="entry name" value="SDR39U1"/>
</dbReference>
<dbReference type="NCBIfam" id="TIGR01777">
    <property type="entry name" value="yfcH"/>
    <property type="match status" value="1"/>
</dbReference>
<dbReference type="PANTHER" id="PTHR11092:SF0">
    <property type="entry name" value="EPIMERASE FAMILY PROTEIN SDR39U1"/>
    <property type="match status" value="1"/>
</dbReference>
<dbReference type="PANTHER" id="PTHR11092">
    <property type="entry name" value="SUGAR NUCLEOTIDE EPIMERASE RELATED"/>
    <property type="match status" value="1"/>
</dbReference>
<dbReference type="Pfam" id="PF08338">
    <property type="entry name" value="DUF1731"/>
    <property type="match status" value="1"/>
</dbReference>
<dbReference type="Pfam" id="PF01370">
    <property type="entry name" value="Epimerase"/>
    <property type="match status" value="1"/>
</dbReference>
<dbReference type="SUPFAM" id="SSF51735">
    <property type="entry name" value="NAD(P)-binding Rossmann-fold domains"/>
    <property type="match status" value="1"/>
</dbReference>
<comment type="similarity">
    <text evidence="1">Belongs to the NAD(P)-dependent epimerase/dehydratase family. SDR39U1 subfamily.</text>
</comment>
<reference key="1">
    <citation type="journal article" date="2005" name="J. Bacteriol.">
        <title>Insights on evolution of virulence and resistance from the complete genome analysis of an early methicillin-resistant Staphylococcus aureus strain and a biofilm-producing methicillin-resistant Staphylococcus epidermidis strain.</title>
        <authorList>
            <person name="Gill S.R."/>
            <person name="Fouts D.E."/>
            <person name="Archer G.L."/>
            <person name="Mongodin E.F."/>
            <person name="DeBoy R.T."/>
            <person name="Ravel J."/>
            <person name="Paulsen I.T."/>
            <person name="Kolonay J.F."/>
            <person name="Brinkac L.M."/>
            <person name="Beanan M.J."/>
            <person name="Dodson R.J."/>
            <person name="Daugherty S.C."/>
            <person name="Madupu R."/>
            <person name="Angiuoli S.V."/>
            <person name="Durkin A.S."/>
            <person name="Haft D.H."/>
            <person name="Vamathevan J.J."/>
            <person name="Khouri H."/>
            <person name="Utterback T.R."/>
            <person name="Lee C."/>
            <person name="Dimitrov G."/>
            <person name="Jiang L."/>
            <person name="Qin H."/>
            <person name="Weidman J."/>
            <person name="Tran K."/>
            <person name="Kang K.H."/>
            <person name="Hance I.R."/>
            <person name="Nelson K.E."/>
            <person name="Fraser C.M."/>
        </authorList>
    </citation>
    <scope>NUCLEOTIDE SEQUENCE [LARGE SCALE GENOMIC DNA]</scope>
    <source>
        <strain>COL</strain>
    </source>
</reference>
<gene>
    <name type="ordered locus">SACOL0834</name>
</gene>
<proteinExistence type="inferred from homology"/>
<name>Y834_STAAC</name>
<evidence type="ECO:0000305" key="1"/>
<organism>
    <name type="scientific">Staphylococcus aureus (strain COL)</name>
    <dbReference type="NCBI Taxonomy" id="93062"/>
    <lineage>
        <taxon>Bacteria</taxon>
        <taxon>Bacillati</taxon>
        <taxon>Bacillota</taxon>
        <taxon>Bacilli</taxon>
        <taxon>Bacillales</taxon>
        <taxon>Staphylococcaceae</taxon>
        <taxon>Staphylococcus</taxon>
    </lineage>
</organism>